<reference key="1">
    <citation type="journal article" date="1992" name="J. Bacteriol.">
        <title>Sequence and transcriptional analysis of the Streptomyces glaucescens tcmAR tetracenomycin C resistance and repressor gene loci.</title>
        <authorList>
            <person name="Guilfoile P.G."/>
            <person name="Hutchinson C.R."/>
        </authorList>
    </citation>
    <scope>NUCLEOTIDE SEQUENCE [GENOMIC DNA]</scope>
    <source>
        <strain>DSM 40716 / ETH 22794 / Tue 49</strain>
    </source>
</reference>
<reference key="2">
    <citation type="journal article" date="1992" name="J. Bacteriol.">
        <title>The Streptomyces glaucescens TcmR protein represses transcription of the divergently oriented tcmR and tcmA genes by binding to an intergenic operator region.</title>
        <authorList>
            <person name="Guilfoile P.G."/>
            <person name="Hutchinson C.R."/>
        </authorList>
    </citation>
    <scope>FUNCTION</scope>
    <source>
        <strain>DSM 40716 / ETH 22794 / Tue 49</strain>
    </source>
</reference>
<dbReference type="EMBL" id="M80674">
    <property type="protein sequence ID" value="AAA67508.1"/>
    <property type="status" value="ALT_SEQ"/>
    <property type="molecule type" value="Genomic_DNA"/>
</dbReference>
<dbReference type="PIR" id="S27686">
    <property type="entry name" value="S27686"/>
</dbReference>
<dbReference type="RefSeq" id="WP_052413891.1">
    <property type="nucleotide sequence ID" value="NZ_CP009438.1"/>
</dbReference>
<dbReference type="SMR" id="P39885"/>
<dbReference type="STRING" id="1907.SGLAU_26320"/>
<dbReference type="eggNOG" id="COG1309">
    <property type="taxonomic scope" value="Bacteria"/>
</dbReference>
<dbReference type="OrthoDB" id="8688418at2"/>
<dbReference type="UniPathway" id="UPA00174"/>
<dbReference type="GO" id="GO:0003700">
    <property type="term" value="F:DNA-binding transcription factor activity"/>
    <property type="evidence" value="ECO:0007669"/>
    <property type="project" value="TreeGrafter"/>
</dbReference>
<dbReference type="GO" id="GO:0000976">
    <property type="term" value="F:transcription cis-regulatory region binding"/>
    <property type="evidence" value="ECO:0007669"/>
    <property type="project" value="TreeGrafter"/>
</dbReference>
<dbReference type="GO" id="GO:0017000">
    <property type="term" value="P:antibiotic biosynthetic process"/>
    <property type="evidence" value="ECO:0007669"/>
    <property type="project" value="UniProtKB-KW"/>
</dbReference>
<dbReference type="Gene3D" id="1.10.10.60">
    <property type="entry name" value="Homeodomain-like"/>
    <property type="match status" value="1"/>
</dbReference>
<dbReference type="Gene3D" id="1.10.357.10">
    <property type="entry name" value="Tetracycline Repressor, domain 2"/>
    <property type="match status" value="1"/>
</dbReference>
<dbReference type="InterPro" id="IPR023772">
    <property type="entry name" value="DNA-bd_HTH_TetR-type_CS"/>
</dbReference>
<dbReference type="InterPro" id="IPR009057">
    <property type="entry name" value="Homeodomain-like_sf"/>
</dbReference>
<dbReference type="InterPro" id="IPR050109">
    <property type="entry name" value="HTH-type_TetR-like_transc_reg"/>
</dbReference>
<dbReference type="InterPro" id="IPR001647">
    <property type="entry name" value="HTH_TetR"/>
</dbReference>
<dbReference type="InterPro" id="IPR041347">
    <property type="entry name" value="MftR_C"/>
</dbReference>
<dbReference type="PANTHER" id="PTHR30055">
    <property type="entry name" value="HTH-TYPE TRANSCRIPTIONAL REGULATOR RUTR"/>
    <property type="match status" value="1"/>
</dbReference>
<dbReference type="PANTHER" id="PTHR30055:SF238">
    <property type="entry name" value="MYCOFACTOCIN BIOSYNTHESIS TRANSCRIPTIONAL REGULATOR MFTR-RELATED"/>
    <property type="match status" value="1"/>
</dbReference>
<dbReference type="Pfam" id="PF17754">
    <property type="entry name" value="TetR_C_14"/>
    <property type="match status" value="1"/>
</dbReference>
<dbReference type="Pfam" id="PF00440">
    <property type="entry name" value="TetR_N"/>
    <property type="match status" value="1"/>
</dbReference>
<dbReference type="PRINTS" id="PR00455">
    <property type="entry name" value="HTHTETR"/>
</dbReference>
<dbReference type="SUPFAM" id="SSF46689">
    <property type="entry name" value="Homeodomain-like"/>
    <property type="match status" value="1"/>
</dbReference>
<dbReference type="PROSITE" id="PS01081">
    <property type="entry name" value="HTH_TETR_1"/>
    <property type="match status" value="1"/>
</dbReference>
<dbReference type="PROSITE" id="PS50977">
    <property type="entry name" value="HTH_TETR_2"/>
    <property type="match status" value="1"/>
</dbReference>
<evidence type="ECO:0000255" key="1">
    <source>
        <dbReference type="PROSITE-ProRule" id="PRU00335"/>
    </source>
</evidence>
<evidence type="ECO:0000256" key="2">
    <source>
        <dbReference type="SAM" id="MobiDB-lite"/>
    </source>
</evidence>
<evidence type="ECO:0000269" key="3">
    <source>
    </source>
</evidence>
<sequence>MDSAETDTPSTRSTPNGPGLRQRKLRRTRDQLIREALELFLAQGYEHTTVEQIAEAVEVHPRTFFRHFASKEEVALTPISAIDEAFLAALEVRPAGENPLQAMSGAFRAVLGRVRDGELEGVDGALHMAMMRLVERTPGLLAEYLRRSEEMEGRLARIIAAREGVDLDDDFRPRFIVAVFKAVGRVVSREWYLRADTDLEALSVAFESALDSLRPELFADWRRPGA</sequence>
<proteinExistence type="predicted"/>
<accession>P39885</accession>
<name>TCMR_STRGA</name>
<feature type="chain" id="PRO_0000070611" description="HTH-type transcriptional regulator TcmR">
    <location>
        <begin position="1"/>
        <end position="226"/>
    </location>
</feature>
<feature type="domain" description="HTH tetR-type" evidence="1">
    <location>
        <begin position="26"/>
        <end position="86"/>
    </location>
</feature>
<feature type="DNA-binding region" description="H-T-H motif" evidence="1">
    <location>
        <begin position="49"/>
        <end position="68"/>
    </location>
</feature>
<feature type="region of interest" description="Disordered" evidence="2">
    <location>
        <begin position="1"/>
        <end position="25"/>
    </location>
</feature>
<feature type="compositionally biased region" description="Polar residues" evidence="2">
    <location>
        <begin position="1"/>
        <end position="16"/>
    </location>
</feature>
<keyword id="KW-0045">Antibiotic biosynthesis</keyword>
<keyword id="KW-0238">DNA-binding</keyword>
<keyword id="KW-0678">Repressor</keyword>
<keyword id="KW-0804">Transcription</keyword>
<keyword id="KW-0805">Transcription regulation</keyword>
<comment type="function">
    <text evidence="3">Represses transcription of the divergently oriented tcmR and tcmA (tetracenomycin C resistance and export) genes by binding to an intergenic operator region. This binding is inhibited by tetracenomycin C.</text>
</comment>
<comment type="pathway">
    <text>Antibiotic biosynthesis; tetracenomycin C biosynthesis.</text>
</comment>
<gene>
    <name type="primary">tcmR</name>
</gene>
<organism>
    <name type="scientific">Streptomyces glaucescens</name>
    <dbReference type="NCBI Taxonomy" id="1907"/>
    <lineage>
        <taxon>Bacteria</taxon>
        <taxon>Bacillati</taxon>
        <taxon>Actinomycetota</taxon>
        <taxon>Actinomycetes</taxon>
        <taxon>Kitasatosporales</taxon>
        <taxon>Streptomycetaceae</taxon>
        <taxon>Streptomyces</taxon>
    </lineage>
</organism>
<protein>
    <recommendedName>
        <fullName>HTH-type transcriptional regulator TcmR</fullName>
    </recommendedName>
    <alternativeName>
        <fullName>Tetracenomycin C transcriptional repressor</fullName>
    </alternativeName>
</protein>